<name>TFS2_CAEEL</name>
<reference key="1">
    <citation type="journal article" date="1998" name="Science">
        <title>Genome sequence of the nematode C. elegans: a platform for investigating biology.</title>
        <authorList>
            <consortium name="The C. elegans sequencing consortium"/>
        </authorList>
    </citation>
    <scope>NUCLEOTIDE SEQUENCE [LARGE SCALE GENOMIC DNA]</scope>
    <source>
        <strain>Bristol N2</strain>
    </source>
</reference>
<proteinExistence type="inferred from homology"/>
<accession>P52652</accession>
<protein>
    <recommendedName>
        <fullName>Putative transcription elongation factor S-II</fullName>
    </recommendedName>
    <alternativeName>
        <fullName>TFIIS</fullName>
    </alternativeName>
</protein>
<evidence type="ECO:0000250" key="1"/>
<evidence type="ECO:0000255" key="2">
    <source>
        <dbReference type="PROSITE-ProRule" id="PRU00472"/>
    </source>
</evidence>
<evidence type="ECO:0000255" key="3">
    <source>
        <dbReference type="PROSITE-ProRule" id="PRU00649"/>
    </source>
</evidence>
<evidence type="ECO:0000255" key="4">
    <source>
        <dbReference type="PROSITE-ProRule" id="PRU00651"/>
    </source>
</evidence>
<evidence type="ECO:0000256" key="5">
    <source>
        <dbReference type="SAM" id="MobiDB-lite"/>
    </source>
</evidence>
<evidence type="ECO:0000305" key="6"/>
<feature type="chain" id="PRO_0000121444" description="Putative transcription elongation factor S-II">
    <location>
        <begin position="1"/>
        <end position="308"/>
    </location>
</feature>
<feature type="domain" description="TFIIS N-terminal" evidence="3">
    <location>
        <begin position="5"/>
        <end position="84"/>
    </location>
</feature>
<feature type="domain" description="TFIIS central" evidence="4">
    <location>
        <begin position="148"/>
        <end position="263"/>
    </location>
</feature>
<feature type="zinc finger region" description="TFIIS-type" evidence="2">
    <location>
        <begin position="266"/>
        <end position="306"/>
    </location>
</feature>
<feature type="region of interest" description="Disordered" evidence="5">
    <location>
        <begin position="82"/>
        <end position="126"/>
    </location>
</feature>
<feature type="compositionally biased region" description="Basic and acidic residues" evidence="5">
    <location>
        <begin position="102"/>
        <end position="125"/>
    </location>
</feature>
<feature type="binding site" evidence="2">
    <location>
        <position position="270"/>
    </location>
    <ligand>
        <name>Zn(2+)</name>
        <dbReference type="ChEBI" id="CHEBI:29105"/>
    </ligand>
</feature>
<feature type="binding site" evidence="2">
    <location>
        <position position="273"/>
    </location>
    <ligand>
        <name>Zn(2+)</name>
        <dbReference type="ChEBI" id="CHEBI:29105"/>
    </ligand>
</feature>
<feature type="binding site" evidence="2">
    <location>
        <position position="298"/>
    </location>
    <ligand>
        <name>Zn(2+)</name>
        <dbReference type="ChEBI" id="CHEBI:29105"/>
    </ligand>
</feature>
<feature type="binding site" evidence="2">
    <location>
        <position position="301"/>
    </location>
    <ligand>
        <name>Zn(2+)</name>
        <dbReference type="ChEBI" id="CHEBI:29105"/>
    </ligand>
</feature>
<keyword id="KW-0238">DNA-binding</keyword>
<keyword id="KW-0479">Metal-binding</keyword>
<keyword id="KW-0539">Nucleus</keyword>
<keyword id="KW-1185">Reference proteome</keyword>
<keyword id="KW-0804">Transcription</keyword>
<keyword id="KW-0805">Transcription regulation</keyword>
<keyword id="KW-0862">Zinc</keyword>
<keyword id="KW-0863">Zinc-finger</keyword>
<dbReference type="EMBL" id="Z54216">
    <property type="protein sequence ID" value="CAA90943.1"/>
    <property type="molecule type" value="Genomic_DNA"/>
</dbReference>
<dbReference type="PIR" id="T25250">
    <property type="entry name" value="T25250"/>
</dbReference>
<dbReference type="RefSeq" id="NP_495941.1">
    <property type="nucleotide sequence ID" value="NM_063540.3"/>
</dbReference>
<dbReference type="SMR" id="P52652"/>
<dbReference type="BioGRID" id="39775">
    <property type="interactions" value="16"/>
</dbReference>
<dbReference type="FunCoup" id="P52652">
    <property type="interactions" value="3254"/>
</dbReference>
<dbReference type="STRING" id="6239.T24H10.1.1"/>
<dbReference type="iPTMnet" id="P52652"/>
<dbReference type="PaxDb" id="6239-T24H10.1"/>
<dbReference type="PeptideAtlas" id="P52652"/>
<dbReference type="EnsemblMetazoa" id="T24H10.1.1">
    <property type="protein sequence ID" value="T24H10.1.1"/>
    <property type="gene ID" value="WBGene00012000"/>
</dbReference>
<dbReference type="GeneID" id="174450"/>
<dbReference type="KEGG" id="cel:CELE_T24H10.1"/>
<dbReference type="UCSC" id="T24H10.1">
    <property type="organism name" value="c. elegans"/>
</dbReference>
<dbReference type="AGR" id="WB:WBGene00012000"/>
<dbReference type="CTD" id="174450"/>
<dbReference type="WormBase" id="T24H10.1">
    <property type="protein sequence ID" value="CE03726"/>
    <property type="gene ID" value="WBGene00012000"/>
</dbReference>
<dbReference type="eggNOG" id="KOG1105">
    <property type="taxonomic scope" value="Eukaryota"/>
</dbReference>
<dbReference type="GeneTree" id="ENSGT00940000168073"/>
<dbReference type="HOGENOM" id="CLU_037637_2_0_1"/>
<dbReference type="InParanoid" id="P52652"/>
<dbReference type="OMA" id="DACDPFR"/>
<dbReference type="OrthoDB" id="44867at2759"/>
<dbReference type="PhylomeDB" id="P52652"/>
<dbReference type="Reactome" id="R-CEL-112382">
    <property type="pathway name" value="Formation of RNA Pol II elongation complex"/>
</dbReference>
<dbReference type="Reactome" id="R-CEL-674695">
    <property type="pathway name" value="RNA Polymerase II Pre-transcription Events"/>
</dbReference>
<dbReference type="Reactome" id="R-CEL-6781823">
    <property type="pathway name" value="Formation of TC-NER Pre-Incision Complex"/>
</dbReference>
<dbReference type="Reactome" id="R-CEL-6782135">
    <property type="pathway name" value="Dual incision in TC-NER"/>
</dbReference>
<dbReference type="Reactome" id="R-CEL-6782210">
    <property type="pathway name" value="Gap-filling DNA repair synthesis and ligation in TC-NER"/>
</dbReference>
<dbReference type="Reactome" id="R-CEL-6796648">
    <property type="pathway name" value="TP53 Regulates Transcription of DNA Repair Genes"/>
</dbReference>
<dbReference type="Reactome" id="R-CEL-75955">
    <property type="pathway name" value="RNA Polymerase II Transcription Elongation"/>
</dbReference>
<dbReference type="PRO" id="PR:P52652"/>
<dbReference type="Proteomes" id="UP000001940">
    <property type="component" value="Chromosome II"/>
</dbReference>
<dbReference type="Bgee" id="WBGene00012000">
    <property type="expression patterns" value="Expressed in embryo and 4 other cell types or tissues"/>
</dbReference>
<dbReference type="GO" id="GO:0005634">
    <property type="term" value="C:nucleus"/>
    <property type="evidence" value="ECO:0000318"/>
    <property type="project" value="GO_Central"/>
</dbReference>
<dbReference type="GO" id="GO:0003677">
    <property type="term" value="F:DNA binding"/>
    <property type="evidence" value="ECO:0007669"/>
    <property type="project" value="UniProtKB-KW"/>
</dbReference>
<dbReference type="GO" id="GO:0008270">
    <property type="term" value="F:zinc ion binding"/>
    <property type="evidence" value="ECO:0007669"/>
    <property type="project" value="UniProtKB-KW"/>
</dbReference>
<dbReference type="GO" id="GO:0006357">
    <property type="term" value="P:regulation of transcription by RNA polymerase II"/>
    <property type="evidence" value="ECO:0000318"/>
    <property type="project" value="GO_Central"/>
</dbReference>
<dbReference type="GO" id="GO:0006368">
    <property type="term" value="P:transcription elongation by RNA polymerase II"/>
    <property type="evidence" value="ECO:0007669"/>
    <property type="project" value="InterPro"/>
</dbReference>
<dbReference type="CDD" id="cd00183">
    <property type="entry name" value="TFIIS_I"/>
    <property type="match status" value="1"/>
</dbReference>
<dbReference type="CDD" id="cd13749">
    <property type="entry name" value="Zn-ribbon_TFIIS"/>
    <property type="match status" value="1"/>
</dbReference>
<dbReference type="FunFam" id="2.20.25.10:FF:000001">
    <property type="entry name" value="Probable Transcription elongation factor S-II"/>
    <property type="match status" value="1"/>
</dbReference>
<dbReference type="Gene3D" id="2.20.25.10">
    <property type="match status" value="1"/>
</dbReference>
<dbReference type="Gene3D" id="1.20.930.10">
    <property type="entry name" value="Conserved domain common to transcription factors TFIIS, elongin A, CRSP70"/>
    <property type="match status" value="1"/>
</dbReference>
<dbReference type="Gene3D" id="1.10.472.30">
    <property type="entry name" value="Transcription elongation factor S-II, central domain"/>
    <property type="match status" value="1"/>
</dbReference>
<dbReference type="InterPro" id="IPR035100">
    <property type="entry name" value="TF_IIS-typ"/>
</dbReference>
<dbReference type="InterPro" id="IPR003617">
    <property type="entry name" value="TFIIS/CRSP70_N_sub"/>
</dbReference>
<dbReference type="InterPro" id="IPR035441">
    <property type="entry name" value="TFIIS/LEDGF_dom_sf"/>
</dbReference>
<dbReference type="InterPro" id="IPR003618">
    <property type="entry name" value="TFIIS_cen_dom"/>
</dbReference>
<dbReference type="InterPro" id="IPR036575">
    <property type="entry name" value="TFIIS_cen_dom_sf"/>
</dbReference>
<dbReference type="InterPro" id="IPR017923">
    <property type="entry name" value="TFIIS_N"/>
</dbReference>
<dbReference type="InterPro" id="IPR006289">
    <property type="entry name" value="TFSII"/>
</dbReference>
<dbReference type="InterPro" id="IPR001222">
    <property type="entry name" value="Znf_TFIIS"/>
</dbReference>
<dbReference type="NCBIfam" id="TIGR01385">
    <property type="entry name" value="TFSII"/>
    <property type="match status" value="1"/>
</dbReference>
<dbReference type="PANTHER" id="PTHR11477:SF0">
    <property type="entry name" value="IP08861P-RELATED"/>
    <property type="match status" value="1"/>
</dbReference>
<dbReference type="PANTHER" id="PTHR11477">
    <property type="entry name" value="TRANSCRIPTION FACTOR S-II ZINC FINGER DOMAIN-CONTAINING PROTEIN"/>
    <property type="match status" value="1"/>
</dbReference>
<dbReference type="Pfam" id="PF08711">
    <property type="entry name" value="Med26"/>
    <property type="match status" value="1"/>
</dbReference>
<dbReference type="Pfam" id="PF07500">
    <property type="entry name" value="TFIIS_M"/>
    <property type="match status" value="1"/>
</dbReference>
<dbReference type="Pfam" id="PF01096">
    <property type="entry name" value="Zn_ribbon_TFIIS"/>
    <property type="match status" value="1"/>
</dbReference>
<dbReference type="PIRSF" id="PIRSF006704">
    <property type="entry name" value="TF_IIS"/>
    <property type="match status" value="1"/>
</dbReference>
<dbReference type="SMART" id="SM00510">
    <property type="entry name" value="TFS2M"/>
    <property type="match status" value="1"/>
</dbReference>
<dbReference type="SMART" id="SM00509">
    <property type="entry name" value="TFS2N"/>
    <property type="match status" value="1"/>
</dbReference>
<dbReference type="SMART" id="SM00440">
    <property type="entry name" value="ZnF_C2C2"/>
    <property type="match status" value="1"/>
</dbReference>
<dbReference type="SUPFAM" id="SSF47676">
    <property type="entry name" value="Conserved domain common to transcription factors TFIIS, elongin A, CRSP70"/>
    <property type="match status" value="1"/>
</dbReference>
<dbReference type="SUPFAM" id="SSF46942">
    <property type="entry name" value="Elongation factor TFIIS domain 2"/>
    <property type="match status" value="1"/>
</dbReference>
<dbReference type="SUPFAM" id="SSF57783">
    <property type="entry name" value="Zinc beta-ribbon"/>
    <property type="match status" value="1"/>
</dbReference>
<dbReference type="PROSITE" id="PS51321">
    <property type="entry name" value="TFIIS_CENTRAL"/>
    <property type="match status" value="1"/>
</dbReference>
<dbReference type="PROSITE" id="PS51319">
    <property type="entry name" value="TFIIS_N"/>
    <property type="match status" value="1"/>
</dbReference>
<dbReference type="PROSITE" id="PS00466">
    <property type="entry name" value="ZF_TFIIS_1"/>
    <property type="match status" value="1"/>
</dbReference>
<dbReference type="PROSITE" id="PS51133">
    <property type="entry name" value="ZF_TFIIS_2"/>
    <property type="match status" value="1"/>
</dbReference>
<sequence length="308" mass="34873">MSALEETQSLCKQVDDICNNGMESVEQCNKLLDQLSKIPMSIEIIQKTNIGIKVNMMRKKVTDDAVAKRAKNIIKDWKNVVDGKSKSQDDGGAPPAKKHRKESVEEAKPEKKKIEAPYKRPEPSSRPEIVAQFASASFPPKHLENDETRLKSAQLLLSALRFGDMPQGTLDPEELAVQIEEKLYSVHRDTNKSYSAAVRSRIFNLRDKKNLALRENVLTGVVRAEKFATMTSEEMASAEIREMRDKFTKEAILEHQMSVQQGTPSDMFKCGKCGKKNCTYTQLQTRSSDEPMTTFVFCLECGNRWKFC</sequence>
<comment type="function">
    <text evidence="1">Necessary for efficient RNA polymerase II transcription elongation past template-encoded arresting sites. The arresting sites in DNA have the property of trapping a certain fraction of elongating RNA polymerases that pass through, resulting in locked ternary complexes. Cleavage of the nascent transcript by S-II allows the resumption of elongation from the new 3'-terminus (By similarity).</text>
</comment>
<comment type="subcellular location">
    <subcellularLocation>
        <location evidence="3 4">Nucleus</location>
    </subcellularLocation>
</comment>
<comment type="similarity">
    <text evidence="6">Belongs to the TFS-II family.</text>
</comment>
<gene>
    <name type="ORF">T24H10.1</name>
</gene>
<organism>
    <name type="scientific">Caenorhabditis elegans</name>
    <dbReference type="NCBI Taxonomy" id="6239"/>
    <lineage>
        <taxon>Eukaryota</taxon>
        <taxon>Metazoa</taxon>
        <taxon>Ecdysozoa</taxon>
        <taxon>Nematoda</taxon>
        <taxon>Chromadorea</taxon>
        <taxon>Rhabditida</taxon>
        <taxon>Rhabditina</taxon>
        <taxon>Rhabditomorpha</taxon>
        <taxon>Rhabditoidea</taxon>
        <taxon>Rhabditidae</taxon>
        <taxon>Peloderinae</taxon>
        <taxon>Caenorhabditis</taxon>
    </lineage>
</organism>